<comment type="function">
    <text evidence="2">Component of the small ribosomal subunit. The ribosome is a large ribonucleoprotein complex responsible for the synthesis of proteins in the cell. Required for proper rRNA processing and maturation of 18S rRNAs. Part of the small subunit (SSU) processome, first precursor of the small eukaryotic ribosomal subunit. During the assembly of the SSU processome in the nucleolus, many ribosome biogenesis factors, an RNA chaperone and ribosomal proteins associate with the nascent pre-rRNA and work in concert to generate RNA folding, modifications, rearrangements and cleavage as well as targeted degradation of pre-ribosomal RNA by the RNA exosome.</text>
</comment>
<comment type="cofactor">
    <cofactor evidence="5">
        <name>Zn(2+)</name>
        <dbReference type="ChEBI" id="CHEBI:29105"/>
    </cofactor>
    <text evidence="5">Binds 1 zinc ion per subunit.</text>
</comment>
<comment type="subunit">
    <text evidence="2">Component of the small ribosomal subunit. Part of the small subunit (SSU) processome, composed of more than 70 proteins and the RNA chaperone small nucleolar RNA (snoRNA) U3.</text>
</comment>
<comment type="subcellular location">
    <subcellularLocation>
        <location evidence="2">Cytoplasm</location>
    </subcellularLocation>
    <subcellularLocation>
        <location evidence="2">Nucleus</location>
        <location evidence="2">Nucleolus</location>
    </subcellularLocation>
</comment>
<comment type="similarity">
    <text evidence="5">Belongs to the eukaryotic ribosomal protein eS27 family.</text>
</comment>
<name>RS27_XENLA</name>
<sequence>MPLAKDLLHPTPEEEKRKHKKKRLVQSPNSYFMDVKCPGCYKITTVFSHAQTVVLCVGCSTVLCQPTGGKARLTEGCSFRRKQH</sequence>
<protein>
    <recommendedName>
        <fullName evidence="5">Small ribosomal subunit protein eS27</fullName>
    </recommendedName>
    <alternativeName>
        <fullName>40S ribosomal protein S27</fullName>
    </alternativeName>
</protein>
<organism>
    <name type="scientific">Xenopus laevis</name>
    <name type="common">African clawed frog</name>
    <dbReference type="NCBI Taxonomy" id="8355"/>
    <lineage>
        <taxon>Eukaryota</taxon>
        <taxon>Metazoa</taxon>
        <taxon>Chordata</taxon>
        <taxon>Craniata</taxon>
        <taxon>Vertebrata</taxon>
        <taxon>Euteleostomi</taxon>
        <taxon>Amphibia</taxon>
        <taxon>Batrachia</taxon>
        <taxon>Anura</taxon>
        <taxon>Pipoidea</taxon>
        <taxon>Pipidae</taxon>
        <taxon>Xenopodinae</taxon>
        <taxon>Xenopus</taxon>
        <taxon>Xenopus</taxon>
    </lineage>
</organism>
<evidence type="ECO:0000250" key="1"/>
<evidence type="ECO:0000250" key="2">
    <source>
        <dbReference type="UniProtKB" id="P42677"/>
    </source>
</evidence>
<evidence type="ECO:0000255" key="3"/>
<evidence type="ECO:0000256" key="4">
    <source>
        <dbReference type="SAM" id="MobiDB-lite"/>
    </source>
</evidence>
<evidence type="ECO:0000305" key="5"/>
<keyword id="KW-0963">Cytoplasm</keyword>
<keyword id="KW-0479">Metal-binding</keyword>
<keyword id="KW-0539">Nucleus</keyword>
<keyword id="KW-1185">Reference proteome</keyword>
<keyword id="KW-0687">Ribonucleoprotein</keyword>
<keyword id="KW-0689">Ribosomal protein</keyword>
<keyword id="KW-0862">Zinc</keyword>
<keyword id="KW-0863">Zinc-finger</keyword>
<proteinExistence type="inferred from homology"/>
<gene>
    <name type="primary">rps27</name>
</gene>
<reference key="1">
    <citation type="submission" date="1993-04" db="EMBL/GenBank/DDBJ databases">
        <authorList>
            <person name="Ladomery M.R."/>
            <person name="Sommerville J."/>
        </authorList>
    </citation>
    <scope>NUCLEOTIDE SEQUENCE [MRNA]</scope>
    <source>
        <tissue>Ovary</tissue>
    </source>
</reference>
<reference key="2">
    <citation type="submission" date="2003-06" db="EMBL/GenBank/DDBJ databases">
        <authorList>
            <consortium name="NIH - Xenopus Gene Collection (XGC) project"/>
        </authorList>
    </citation>
    <scope>NUCLEOTIDE SEQUENCE [LARGE SCALE MRNA]</scope>
</reference>
<accession>P47904</accession>
<accession>Q5D091</accession>
<feature type="initiator methionine" description="Removed" evidence="1">
    <location>
        <position position="1"/>
    </location>
</feature>
<feature type="chain" id="PRO_0000149058" description="Small ribosomal subunit protein eS27">
    <location>
        <begin position="2"/>
        <end position="84"/>
    </location>
</feature>
<feature type="zinc finger region" description="C4-type" evidence="3">
    <location>
        <begin position="37"/>
        <end position="59"/>
    </location>
</feature>
<feature type="region of interest" description="Disordered" evidence="4">
    <location>
        <begin position="1"/>
        <end position="23"/>
    </location>
</feature>
<feature type="compositionally biased region" description="Basic and acidic residues" evidence="4">
    <location>
        <begin position="1"/>
        <end position="16"/>
    </location>
</feature>
<dbReference type="EMBL" id="X71350">
    <property type="protein sequence ID" value="CAA50485.1"/>
    <property type="molecule type" value="mRNA"/>
</dbReference>
<dbReference type="EMBL" id="BC053815">
    <property type="protein sequence ID" value="AAH53815.1"/>
    <property type="molecule type" value="mRNA"/>
</dbReference>
<dbReference type="PIR" id="S35758">
    <property type="entry name" value="S35758"/>
</dbReference>
<dbReference type="RefSeq" id="NP_001080694.1">
    <property type="nucleotide sequence ID" value="NM_001087225.2"/>
</dbReference>
<dbReference type="SMR" id="P47904"/>
<dbReference type="BioGRID" id="98628">
    <property type="interactions" value="2"/>
</dbReference>
<dbReference type="IntAct" id="P47904">
    <property type="interactions" value="1"/>
</dbReference>
<dbReference type="DNASU" id="380386"/>
<dbReference type="GeneID" id="380386"/>
<dbReference type="KEGG" id="xla:380386"/>
<dbReference type="AGR" id="Xenbase:XB-GENE-6253776"/>
<dbReference type="CTD" id="380386"/>
<dbReference type="Xenbase" id="XB-GENE-6253776">
    <property type="gene designation" value="rps27.S"/>
</dbReference>
<dbReference type="OMA" id="IRSCARI"/>
<dbReference type="OrthoDB" id="5567124at2759"/>
<dbReference type="Proteomes" id="UP000186698">
    <property type="component" value="Chromosome 8S"/>
</dbReference>
<dbReference type="Bgee" id="380386">
    <property type="expression patterns" value="Expressed in internal ear and 19 other cell types or tissues"/>
</dbReference>
<dbReference type="GO" id="GO:0022627">
    <property type="term" value="C:cytosolic small ribosomal subunit"/>
    <property type="evidence" value="ECO:0000318"/>
    <property type="project" value="GO_Central"/>
</dbReference>
<dbReference type="GO" id="GO:0005730">
    <property type="term" value="C:nucleolus"/>
    <property type="evidence" value="ECO:0007669"/>
    <property type="project" value="UniProtKB-SubCell"/>
</dbReference>
<dbReference type="GO" id="GO:0032040">
    <property type="term" value="C:small-subunit processome"/>
    <property type="evidence" value="ECO:0000250"/>
    <property type="project" value="UniProtKB"/>
</dbReference>
<dbReference type="GO" id="GO:0003723">
    <property type="term" value="F:RNA binding"/>
    <property type="evidence" value="ECO:0000318"/>
    <property type="project" value="GO_Central"/>
</dbReference>
<dbReference type="GO" id="GO:0003735">
    <property type="term" value="F:structural constituent of ribosome"/>
    <property type="evidence" value="ECO:0000318"/>
    <property type="project" value="GO_Central"/>
</dbReference>
<dbReference type="GO" id="GO:0008270">
    <property type="term" value="F:zinc ion binding"/>
    <property type="evidence" value="ECO:0007669"/>
    <property type="project" value="UniProtKB-KW"/>
</dbReference>
<dbReference type="GO" id="GO:0000028">
    <property type="term" value="P:ribosomal small subunit assembly"/>
    <property type="evidence" value="ECO:0000318"/>
    <property type="project" value="GO_Central"/>
</dbReference>
<dbReference type="GO" id="GO:0042274">
    <property type="term" value="P:ribosomal small subunit biogenesis"/>
    <property type="evidence" value="ECO:0000250"/>
    <property type="project" value="UniProtKB"/>
</dbReference>
<dbReference type="GO" id="GO:0006412">
    <property type="term" value="P:translation"/>
    <property type="evidence" value="ECO:0007669"/>
    <property type="project" value="InterPro"/>
</dbReference>
<dbReference type="FunFam" id="2.20.25.100:FF:000001">
    <property type="entry name" value="40S ribosomal protein S27"/>
    <property type="match status" value="1"/>
</dbReference>
<dbReference type="Gene3D" id="2.20.25.100">
    <property type="entry name" value="Zn-binding ribosomal proteins"/>
    <property type="match status" value="1"/>
</dbReference>
<dbReference type="HAMAP" id="MF_00371">
    <property type="entry name" value="Ribosomal_eS27"/>
    <property type="match status" value="1"/>
</dbReference>
<dbReference type="InterPro" id="IPR000592">
    <property type="entry name" value="Ribosomal_eS27"/>
</dbReference>
<dbReference type="InterPro" id="IPR023407">
    <property type="entry name" value="Ribosomal_eS27_Zn-bd_dom_sf"/>
</dbReference>
<dbReference type="InterPro" id="IPR011332">
    <property type="entry name" value="Ribosomal_zn-bd"/>
</dbReference>
<dbReference type="PANTHER" id="PTHR11594">
    <property type="entry name" value="40S RIBOSOMAL PROTEIN S27"/>
    <property type="match status" value="1"/>
</dbReference>
<dbReference type="Pfam" id="PF01667">
    <property type="entry name" value="Ribosomal_S27e"/>
    <property type="match status" value="1"/>
</dbReference>
<dbReference type="SUPFAM" id="SSF57829">
    <property type="entry name" value="Zn-binding ribosomal proteins"/>
    <property type="match status" value="1"/>
</dbReference>
<dbReference type="PROSITE" id="PS01168">
    <property type="entry name" value="RIBOSOMAL_S27E"/>
    <property type="match status" value="1"/>
</dbReference>